<gene>
    <name type="primary">rpfD</name>
    <name type="ordered locus">Rv2389c</name>
    <name type="ORF">MTCY253.32</name>
</gene>
<proteinExistence type="evidence at protein level"/>
<feature type="chain" id="PRO_0000421030" description="Resuscitation-promoting factor RpfD">
    <location>
        <begin position="1"/>
        <end position="154"/>
    </location>
</feature>
<feature type="transmembrane region" description="Helical" evidence="1">
    <location>
        <begin position="21"/>
        <end position="41"/>
    </location>
</feature>
<accession>P9WG27</accession>
<accession>F2GI59</accession>
<accession>L0TC67</accession>
<accession>P71755</accession>
<accession>Q7D783</accession>
<keyword id="KW-1003">Cell membrane</keyword>
<keyword id="KW-0378">Hydrolase</keyword>
<keyword id="KW-0472">Membrane</keyword>
<keyword id="KW-1185">Reference proteome</keyword>
<keyword id="KW-0812">Transmembrane</keyword>
<keyword id="KW-1133">Transmembrane helix</keyword>
<keyword id="KW-0843">Virulence</keyword>
<organism>
    <name type="scientific">Mycobacterium tuberculosis (strain ATCC 25618 / H37Rv)</name>
    <dbReference type="NCBI Taxonomy" id="83332"/>
    <lineage>
        <taxon>Bacteria</taxon>
        <taxon>Bacillati</taxon>
        <taxon>Actinomycetota</taxon>
        <taxon>Actinomycetes</taxon>
        <taxon>Mycobacteriales</taxon>
        <taxon>Mycobacteriaceae</taxon>
        <taxon>Mycobacterium</taxon>
        <taxon>Mycobacterium tuberculosis complex</taxon>
    </lineage>
</organism>
<evidence type="ECO:0000255" key="1"/>
<evidence type="ECO:0000269" key="2">
    <source>
    </source>
</evidence>
<evidence type="ECO:0000269" key="3">
    <source>
    </source>
</evidence>
<evidence type="ECO:0000269" key="4">
    <source>
    </source>
</evidence>
<evidence type="ECO:0000269" key="5">
    <source>
    </source>
</evidence>
<evidence type="ECO:0000305" key="6"/>
<reference key="1">
    <citation type="journal article" date="1998" name="Nature">
        <title>Deciphering the biology of Mycobacterium tuberculosis from the complete genome sequence.</title>
        <authorList>
            <person name="Cole S.T."/>
            <person name="Brosch R."/>
            <person name="Parkhill J."/>
            <person name="Garnier T."/>
            <person name="Churcher C.M."/>
            <person name="Harris D.E."/>
            <person name="Gordon S.V."/>
            <person name="Eiglmeier K."/>
            <person name="Gas S."/>
            <person name="Barry C.E. III"/>
            <person name="Tekaia F."/>
            <person name="Badcock K."/>
            <person name="Basham D."/>
            <person name="Brown D."/>
            <person name="Chillingworth T."/>
            <person name="Connor R."/>
            <person name="Davies R.M."/>
            <person name="Devlin K."/>
            <person name="Feltwell T."/>
            <person name="Gentles S."/>
            <person name="Hamlin N."/>
            <person name="Holroyd S."/>
            <person name="Hornsby T."/>
            <person name="Jagels K."/>
            <person name="Krogh A."/>
            <person name="McLean J."/>
            <person name="Moule S."/>
            <person name="Murphy L.D."/>
            <person name="Oliver S."/>
            <person name="Osborne J."/>
            <person name="Quail M.A."/>
            <person name="Rajandream M.A."/>
            <person name="Rogers J."/>
            <person name="Rutter S."/>
            <person name="Seeger K."/>
            <person name="Skelton S."/>
            <person name="Squares S."/>
            <person name="Squares R."/>
            <person name="Sulston J.E."/>
            <person name="Taylor K."/>
            <person name="Whitehead S."/>
            <person name="Barrell B.G."/>
        </authorList>
    </citation>
    <scope>NUCLEOTIDE SEQUENCE [LARGE SCALE GENOMIC DNA]</scope>
    <source>
        <strain>ATCC 25618 / H37Rv</strain>
    </source>
</reference>
<reference key="2">
    <citation type="journal article" date="2002" name="Mol. Microbiol.">
        <title>A family of autocrine growth factors in Mycobacterium tuberculosis.</title>
        <authorList>
            <person name="Mukamolova G.V."/>
            <person name="Turapov O.A."/>
            <person name="Young D.I."/>
            <person name="Kaprelyants A.S."/>
            <person name="Kell D.B."/>
            <person name="Young M."/>
        </authorList>
    </citation>
    <scope>FUNCTION</scope>
    <scope>INDUCTION</scope>
    <source>
        <strain>ATCC 25618 / H37Rv</strain>
    </source>
</reference>
<reference key="3">
    <citation type="journal article" date="2003" name="Infect. Immun.">
        <title>Proteins of the Rpf family: immune cell reactivity and vaccination efficacy against tuberculosis in mice.</title>
        <authorList>
            <person name="Yeremeev V.V."/>
            <person name="Kondratieva T.K."/>
            <person name="Rubakova E.I."/>
            <person name="Petrovskaya S.N."/>
            <person name="Kazarian K.A."/>
            <person name="Telkov M.V."/>
            <person name="Biketov S.F."/>
            <person name="Kaprelyants A.S."/>
            <person name="Apt A.S."/>
        </authorList>
    </citation>
    <scope>BIOTECHNOLOGY</scope>
    <source>
        <strain>ATCC 25618 / H37Rv</strain>
    </source>
</reference>
<reference key="4">
    <citation type="journal article" date="2004" name="Tuberculosis">
        <title>Global expression profiling of strains harbouring null mutations reveals that the five rpf-like genes of Mycobacterium tuberculosis show functional redundancy.</title>
        <authorList>
            <person name="Downing K.J."/>
            <person name="Betts J.C."/>
            <person name="Young D.I."/>
            <person name="McAdam R.A."/>
            <person name="Kelly F."/>
            <person name="Young M."/>
            <person name="Mizrahi V."/>
        </authorList>
    </citation>
    <scope>DISRUPTION PHENOTYPE</scope>
    <source>
        <strain>ATCC 25618 / H37Rv</strain>
    </source>
</reference>
<reference key="5">
    <citation type="journal article" date="2008" name="Mol. Microbiol.">
        <title>The resuscitation-promoting factors of Mycobacterium tuberculosis are required for virulence and resuscitation from dormancy but are collectively dispensable for growth in vitro.</title>
        <authorList>
            <person name="Kana B.D."/>
            <person name="Gordhan B.G."/>
            <person name="Downing K.J."/>
            <person name="Sung N."/>
            <person name="Vostroktunova G."/>
            <person name="Machowski E.E."/>
            <person name="Tsenova L."/>
            <person name="Young M."/>
            <person name="Kaprelyants A."/>
            <person name="Kaplan G."/>
            <person name="Mizrahi V."/>
        </authorList>
    </citation>
    <scope>DISRUPTION PHENOTYPE</scope>
    <source>
        <strain>ATCC 25618 / H37Rv</strain>
    </source>
</reference>
<sequence>MTPGLLTTAGAGRPRDRCARIVCTVFIETAVVATMFVALLGLSTISSKADDIDWDAIAQCESGGNWAANTGNGLYGGLQISQATWDSNGGVGSPAAASPQQQIEVADNIMKTQGPGAWPKCSSCSQGDAPLGSLTHILTFLAAETGGCSGSRDD</sequence>
<comment type="function">
    <text evidence="2">Factor that stimulates resuscitation of dormant cells. Has peptidoglycan (PG) hydrolytic activity. Active in the pM concentration range. Has little to no effect on actively-growing cells. PG fragments could either directly activate the resuscitation pathway of dormant bacteria or serve as a substrate for endogenous Rpf, resulting in low molecular weight products with resuscitation activity.</text>
</comment>
<comment type="function">
    <text evidence="2">Stimulates growth of stationary phase M.bovis (a slow-growing Mycobacterium), reduces the lag phase of diluted fast-growers M.smegmatis and Micrococcus luteus. Sequential gene disruption indicates RpfB and RpfE are higher than RpfD and RpfC in functional hierarchy.</text>
</comment>
<comment type="subcellular location">
    <subcellularLocation>
        <location evidence="6">Cell membrane</location>
        <topology evidence="6">Single-pass membrane protein</topology>
    </subcellularLocation>
</comment>
<comment type="induction">
    <text evidence="2">Expressed in actively growing cells.</text>
</comment>
<comment type="disruption phenotype">
    <text evidence="4 5">Not essential, disruption of rpfC alone has no effect on growth or survival in liquid culture, nor in mouse infection models,although colony size is reduced. Alterations in gene expression are seen. All 5 genes in this family can be deleted without affecting growth in culture, however triple deletion mutants (rpfA-rpfC-rpfB or rpfA-rpfC-rpfD) are not able to resuscitate spontaneously in the presence or absence of O(2), and are attenuated in a mouse infection model.</text>
</comment>
<comment type="biotechnology">
    <text evidence="3">Might be a good vaccine candidate.</text>
</comment>
<comment type="similarity">
    <text evidence="6">Belongs to the transglycosylase family. Rpf subfamily.</text>
</comment>
<protein>
    <recommendedName>
        <fullName>Resuscitation-promoting factor RpfD</fullName>
        <ecNumber>3.-.-.-</ecNumber>
    </recommendedName>
</protein>
<dbReference type="EC" id="3.-.-.-"/>
<dbReference type="EMBL" id="AL123456">
    <property type="protein sequence ID" value="CCP45177.1"/>
    <property type="molecule type" value="Genomic_DNA"/>
</dbReference>
<dbReference type="PIR" id="H70681">
    <property type="entry name" value="H70681"/>
</dbReference>
<dbReference type="RefSeq" id="NP_216905.1">
    <property type="nucleotide sequence ID" value="NC_000962.3"/>
</dbReference>
<dbReference type="RefSeq" id="WP_003412293.1">
    <property type="nucleotide sequence ID" value="NZ_NVQJ01000029.1"/>
</dbReference>
<dbReference type="SMR" id="P9WG27"/>
<dbReference type="STRING" id="83332.Rv2389c"/>
<dbReference type="PaxDb" id="83332-Rv2389c"/>
<dbReference type="GeneID" id="885246"/>
<dbReference type="KEGG" id="mtu:Rv2389c"/>
<dbReference type="TubercuList" id="Rv2389c"/>
<dbReference type="eggNOG" id="COG1388">
    <property type="taxonomic scope" value="Bacteria"/>
</dbReference>
<dbReference type="InParanoid" id="P9WG27"/>
<dbReference type="OrthoDB" id="1404170at2"/>
<dbReference type="PhylomeDB" id="P9WG27"/>
<dbReference type="Proteomes" id="UP000001584">
    <property type="component" value="Chromosome"/>
</dbReference>
<dbReference type="GO" id="GO:0005576">
    <property type="term" value="C:extracellular region"/>
    <property type="evidence" value="ECO:0000314"/>
    <property type="project" value="MTBBASE"/>
</dbReference>
<dbReference type="GO" id="GO:0005886">
    <property type="term" value="C:plasma membrane"/>
    <property type="evidence" value="ECO:0007669"/>
    <property type="project" value="UniProtKB-SubCell"/>
</dbReference>
<dbReference type="GO" id="GO:0016787">
    <property type="term" value="F:hydrolase activity"/>
    <property type="evidence" value="ECO:0007669"/>
    <property type="project" value="UniProtKB-KW"/>
</dbReference>
<dbReference type="GO" id="GO:0085016">
    <property type="term" value="P:dormancy exit of symbiont in host"/>
    <property type="evidence" value="ECO:0000314"/>
    <property type="project" value="MTBBASE"/>
</dbReference>
<dbReference type="GO" id="GO:0010629">
    <property type="term" value="P:negative regulation of gene expression"/>
    <property type="evidence" value="ECO:0000314"/>
    <property type="project" value="MTBBASE"/>
</dbReference>
<dbReference type="GO" id="GO:0010628">
    <property type="term" value="P:positive regulation of gene expression"/>
    <property type="evidence" value="ECO:0000314"/>
    <property type="project" value="MTBBASE"/>
</dbReference>
<dbReference type="GO" id="GO:0009372">
    <property type="term" value="P:quorum sensing"/>
    <property type="evidence" value="ECO:0000304"/>
    <property type="project" value="UniProtKB"/>
</dbReference>
<dbReference type="GO" id="GO:0042127">
    <property type="term" value="P:regulation of cell population proliferation"/>
    <property type="evidence" value="ECO:0000314"/>
    <property type="project" value="MTBBASE"/>
</dbReference>
<dbReference type="CDD" id="cd13925">
    <property type="entry name" value="RPF"/>
    <property type="match status" value="1"/>
</dbReference>
<dbReference type="FunFam" id="1.10.530.10:FF:000025">
    <property type="entry name" value="Resuscitation-promoting factor RpfC"/>
    <property type="match status" value="1"/>
</dbReference>
<dbReference type="Gene3D" id="1.10.530.10">
    <property type="match status" value="1"/>
</dbReference>
<dbReference type="InterPro" id="IPR023346">
    <property type="entry name" value="Lysozyme-like_dom_sf"/>
</dbReference>
<dbReference type="InterPro" id="IPR010618">
    <property type="entry name" value="RPF"/>
</dbReference>
<dbReference type="Pfam" id="PF06737">
    <property type="entry name" value="Transglycosylas"/>
    <property type="match status" value="1"/>
</dbReference>
<dbReference type="SUPFAM" id="SSF53955">
    <property type="entry name" value="Lysozyme-like"/>
    <property type="match status" value="1"/>
</dbReference>
<name>RPFD_MYCTU</name>